<evidence type="ECO:0000250" key="1">
    <source>
        <dbReference type="UniProtKB" id="P0A855"/>
    </source>
</evidence>
<evidence type="ECO:0000255" key="2"/>
<evidence type="ECO:0000305" key="3"/>
<comment type="subcellular location">
    <subcellularLocation>
        <location evidence="1">Periplasm</location>
    </subcellularLocation>
</comment>
<comment type="similarity">
    <text evidence="3">Belongs to the TolB family.</text>
</comment>
<dbReference type="EMBL" id="AE015925">
    <property type="protein sequence ID" value="AAP05714.1"/>
    <property type="molecule type" value="Genomic_DNA"/>
</dbReference>
<dbReference type="RefSeq" id="WP_011006927.1">
    <property type="nucleotide sequence ID" value="NC_003361.3"/>
</dbReference>
<dbReference type="SMR" id="Q821G5"/>
<dbReference type="STRING" id="227941.CCA_00975"/>
<dbReference type="KEGG" id="cca:CCA_00975"/>
<dbReference type="eggNOG" id="COG0823">
    <property type="taxonomic scope" value="Bacteria"/>
</dbReference>
<dbReference type="HOGENOM" id="CLU_635688_0_0_0"/>
<dbReference type="OrthoDB" id="108903at2"/>
<dbReference type="Proteomes" id="UP000002193">
    <property type="component" value="Chromosome"/>
</dbReference>
<dbReference type="GO" id="GO:0042597">
    <property type="term" value="C:periplasmic space"/>
    <property type="evidence" value="ECO:0007669"/>
    <property type="project" value="UniProtKB-SubCell"/>
</dbReference>
<dbReference type="Gene3D" id="2.120.10.30">
    <property type="entry name" value="TolB, C-terminal domain"/>
    <property type="match status" value="1"/>
</dbReference>
<dbReference type="InterPro" id="IPR011042">
    <property type="entry name" value="6-blade_b-propeller_TolB-like"/>
</dbReference>
<dbReference type="InterPro" id="IPR011659">
    <property type="entry name" value="PD40"/>
</dbReference>
<dbReference type="NCBIfam" id="NF002183">
    <property type="entry name" value="PRK01029.1"/>
    <property type="match status" value="1"/>
</dbReference>
<dbReference type="PANTHER" id="PTHR36842:SF1">
    <property type="entry name" value="PROTEIN TOLB"/>
    <property type="match status" value="1"/>
</dbReference>
<dbReference type="PANTHER" id="PTHR36842">
    <property type="entry name" value="PROTEIN TOLB HOMOLOG"/>
    <property type="match status" value="1"/>
</dbReference>
<dbReference type="Pfam" id="PF07676">
    <property type="entry name" value="PD40"/>
    <property type="match status" value="3"/>
</dbReference>
<dbReference type="SUPFAM" id="SSF69304">
    <property type="entry name" value="Tricorn protease N-terminal domain"/>
    <property type="match status" value="1"/>
</dbReference>
<name>TOLB_CHLCV</name>
<feature type="signal peptide" evidence="2">
    <location>
        <begin position="1"/>
        <end position="20"/>
    </location>
</feature>
<feature type="chain" id="PRO_0000034638" description="Protein TolB homolog" evidence="2">
    <location>
        <begin position="21"/>
        <end position="427"/>
    </location>
</feature>
<protein>
    <recommendedName>
        <fullName evidence="3">Protein TolB homolog</fullName>
    </recommendedName>
</protein>
<gene>
    <name type="ordered locus">CCA_00975</name>
</gene>
<proteinExistence type="inferred from homology"/>
<keyword id="KW-0574">Periplasm</keyword>
<keyword id="KW-0732">Signal</keyword>
<organism>
    <name type="scientific">Chlamydia caviae (strain ATCC VR-813 / DSM 19441 / 03DC25 / GPIC)</name>
    <name type="common">Chlamydophila caviae</name>
    <dbReference type="NCBI Taxonomy" id="227941"/>
    <lineage>
        <taxon>Bacteria</taxon>
        <taxon>Pseudomonadati</taxon>
        <taxon>Chlamydiota</taxon>
        <taxon>Chlamydiia</taxon>
        <taxon>Chlamydiales</taxon>
        <taxon>Chlamydiaceae</taxon>
        <taxon>Chlamydia/Chlamydophila group</taxon>
        <taxon>Chlamydia</taxon>
    </lineage>
</organism>
<accession>Q821G5</accession>
<reference key="1">
    <citation type="journal article" date="2003" name="Nucleic Acids Res.">
        <title>Genome sequence of Chlamydophila caviae (Chlamydia psittaci GPIC): examining the role of niche-specific genes in the evolution of the Chlamydiaceae.</title>
        <authorList>
            <person name="Read T.D."/>
            <person name="Myers G.S.A."/>
            <person name="Brunham R.C."/>
            <person name="Nelson W.C."/>
            <person name="Paulsen I.T."/>
            <person name="Heidelberg J.F."/>
            <person name="Holtzapple E.K."/>
            <person name="Khouri H.M."/>
            <person name="Federova N.B."/>
            <person name="Carty H.A."/>
            <person name="Umayam L.A."/>
            <person name="Haft D.H."/>
            <person name="Peterson J.D."/>
            <person name="Beanan M.J."/>
            <person name="White O."/>
            <person name="Salzberg S.L."/>
            <person name="Hsia R.-C."/>
            <person name="McClarty G."/>
            <person name="Rank R.G."/>
            <person name="Bavoil P.M."/>
            <person name="Fraser C.M."/>
        </authorList>
    </citation>
    <scope>NUCLEOTIDE SEQUENCE [LARGE SCALE GENOMIC DNA]</scope>
    <source>
        <strain>ATCC VR-813 / DSM 19441 / 03DC25 / GPIC</strain>
    </source>
</reference>
<sequence>MLRRIFVSTFLVFGIVSLYAKDLEVSVRSEISLLPIHVELKIGPNDAKQQKYLRSLCNTFISDLALGDRLQPSSVKSEALSPPFSIAIVSRYPEIAFTIARGSQNHQQFHSLVLTEDISSNRQKIHEAADKIHYALTKVPGISSGKIVFSLSKNPQDGELKQGELWSVDYDGANLRALTQENSLSITPNWMNIGNCNPYLYVSYKYGIPKIFLGSLENTTGKKVLNLQGNQFMPTFSPRKKLLAFISDTYGNPDLFLQSFSLSKGVMGKPRRVLNETFGTQGNPSFSPDGSKLVFVSNRDGRPRLYIIQIDPEIQTPRLLTKKYRNSSCPSWSPDGKKIAFCSVIKGVRQICLYDLSTGKDYQLTTTPIDKEGPSWAIDSQHLVYSAGNSGESELYLLSLITQKTKKIVIGLGEKRFPSWGGFPNNQ</sequence>